<evidence type="ECO:0000255" key="1">
    <source>
        <dbReference type="HAMAP-Rule" id="MF_01631"/>
    </source>
</evidence>
<proteinExistence type="inferred from homology"/>
<accession>A9KBF4</accession>
<name>GLMU_COXBN</name>
<organism>
    <name type="scientific">Coxiella burnetii (strain Dugway 5J108-111)</name>
    <dbReference type="NCBI Taxonomy" id="434922"/>
    <lineage>
        <taxon>Bacteria</taxon>
        <taxon>Pseudomonadati</taxon>
        <taxon>Pseudomonadota</taxon>
        <taxon>Gammaproteobacteria</taxon>
        <taxon>Legionellales</taxon>
        <taxon>Coxiellaceae</taxon>
        <taxon>Coxiella</taxon>
    </lineage>
</organism>
<comment type="function">
    <text evidence="1">Catalyzes the last two sequential reactions in the de novo biosynthetic pathway for UDP-N-acetylglucosamine (UDP-GlcNAc). The C-terminal domain catalyzes the transfer of acetyl group from acetyl coenzyme A to glucosamine-1-phosphate (GlcN-1-P) to produce N-acetylglucosamine-1-phosphate (GlcNAc-1-P), which is converted into UDP-GlcNAc by the transfer of uridine 5-monophosphate (from uridine 5-triphosphate), a reaction catalyzed by the N-terminal domain.</text>
</comment>
<comment type="catalytic activity">
    <reaction evidence="1">
        <text>alpha-D-glucosamine 1-phosphate + acetyl-CoA = N-acetyl-alpha-D-glucosamine 1-phosphate + CoA + H(+)</text>
        <dbReference type="Rhea" id="RHEA:13725"/>
        <dbReference type="ChEBI" id="CHEBI:15378"/>
        <dbReference type="ChEBI" id="CHEBI:57287"/>
        <dbReference type="ChEBI" id="CHEBI:57288"/>
        <dbReference type="ChEBI" id="CHEBI:57776"/>
        <dbReference type="ChEBI" id="CHEBI:58516"/>
        <dbReference type="EC" id="2.3.1.157"/>
    </reaction>
</comment>
<comment type="catalytic activity">
    <reaction evidence="1">
        <text>N-acetyl-alpha-D-glucosamine 1-phosphate + UTP + H(+) = UDP-N-acetyl-alpha-D-glucosamine + diphosphate</text>
        <dbReference type="Rhea" id="RHEA:13509"/>
        <dbReference type="ChEBI" id="CHEBI:15378"/>
        <dbReference type="ChEBI" id="CHEBI:33019"/>
        <dbReference type="ChEBI" id="CHEBI:46398"/>
        <dbReference type="ChEBI" id="CHEBI:57705"/>
        <dbReference type="ChEBI" id="CHEBI:57776"/>
        <dbReference type="EC" id="2.7.7.23"/>
    </reaction>
</comment>
<comment type="cofactor">
    <cofactor evidence="1">
        <name>Mg(2+)</name>
        <dbReference type="ChEBI" id="CHEBI:18420"/>
    </cofactor>
    <text evidence="1">Binds 1 Mg(2+) ion per subunit.</text>
</comment>
<comment type="pathway">
    <text evidence="1">Nucleotide-sugar biosynthesis; UDP-N-acetyl-alpha-D-glucosamine biosynthesis; N-acetyl-alpha-D-glucosamine 1-phosphate from alpha-D-glucosamine 6-phosphate (route II): step 2/2.</text>
</comment>
<comment type="pathway">
    <text evidence="1">Nucleotide-sugar biosynthesis; UDP-N-acetyl-alpha-D-glucosamine biosynthesis; UDP-N-acetyl-alpha-D-glucosamine from N-acetyl-alpha-D-glucosamine 1-phosphate: step 1/1.</text>
</comment>
<comment type="pathway">
    <text evidence="1">Bacterial outer membrane biogenesis; LPS lipid A biosynthesis.</text>
</comment>
<comment type="subunit">
    <text evidence="1">Homotrimer.</text>
</comment>
<comment type="subcellular location">
    <subcellularLocation>
        <location evidence="1">Cytoplasm</location>
    </subcellularLocation>
</comment>
<comment type="similarity">
    <text evidence="1">In the N-terminal section; belongs to the N-acetylglucosamine-1-phosphate uridyltransferase family.</text>
</comment>
<comment type="similarity">
    <text evidence="1">In the C-terminal section; belongs to the transferase hexapeptide repeat family.</text>
</comment>
<dbReference type="EC" id="2.7.7.23" evidence="1"/>
<dbReference type="EC" id="2.3.1.157" evidence="1"/>
<dbReference type="EMBL" id="CP000733">
    <property type="protein sequence ID" value="ABS77990.1"/>
    <property type="molecule type" value="Genomic_DNA"/>
</dbReference>
<dbReference type="RefSeq" id="WP_011996447.1">
    <property type="nucleotide sequence ID" value="NC_009727.1"/>
</dbReference>
<dbReference type="SMR" id="A9KBF4"/>
<dbReference type="KEGG" id="cbd:CBUD_0173"/>
<dbReference type="HOGENOM" id="CLU_029499_15_2_6"/>
<dbReference type="UniPathway" id="UPA00113">
    <property type="reaction ID" value="UER00532"/>
</dbReference>
<dbReference type="UniPathway" id="UPA00113">
    <property type="reaction ID" value="UER00533"/>
</dbReference>
<dbReference type="UniPathway" id="UPA00973"/>
<dbReference type="Proteomes" id="UP000008555">
    <property type="component" value="Chromosome"/>
</dbReference>
<dbReference type="GO" id="GO:0005737">
    <property type="term" value="C:cytoplasm"/>
    <property type="evidence" value="ECO:0007669"/>
    <property type="project" value="UniProtKB-SubCell"/>
</dbReference>
<dbReference type="GO" id="GO:0016020">
    <property type="term" value="C:membrane"/>
    <property type="evidence" value="ECO:0007669"/>
    <property type="project" value="GOC"/>
</dbReference>
<dbReference type="GO" id="GO:0019134">
    <property type="term" value="F:glucosamine-1-phosphate N-acetyltransferase activity"/>
    <property type="evidence" value="ECO:0007669"/>
    <property type="project" value="UniProtKB-UniRule"/>
</dbReference>
<dbReference type="GO" id="GO:0000287">
    <property type="term" value="F:magnesium ion binding"/>
    <property type="evidence" value="ECO:0007669"/>
    <property type="project" value="UniProtKB-UniRule"/>
</dbReference>
<dbReference type="GO" id="GO:0003977">
    <property type="term" value="F:UDP-N-acetylglucosamine diphosphorylase activity"/>
    <property type="evidence" value="ECO:0007669"/>
    <property type="project" value="UniProtKB-UniRule"/>
</dbReference>
<dbReference type="GO" id="GO:0000902">
    <property type="term" value="P:cell morphogenesis"/>
    <property type="evidence" value="ECO:0007669"/>
    <property type="project" value="UniProtKB-UniRule"/>
</dbReference>
<dbReference type="GO" id="GO:0071555">
    <property type="term" value="P:cell wall organization"/>
    <property type="evidence" value="ECO:0007669"/>
    <property type="project" value="UniProtKB-KW"/>
</dbReference>
<dbReference type="GO" id="GO:0009245">
    <property type="term" value="P:lipid A biosynthetic process"/>
    <property type="evidence" value="ECO:0007669"/>
    <property type="project" value="UniProtKB-UniRule"/>
</dbReference>
<dbReference type="GO" id="GO:0009252">
    <property type="term" value="P:peptidoglycan biosynthetic process"/>
    <property type="evidence" value="ECO:0007669"/>
    <property type="project" value="UniProtKB-UniRule"/>
</dbReference>
<dbReference type="GO" id="GO:0008360">
    <property type="term" value="P:regulation of cell shape"/>
    <property type="evidence" value="ECO:0007669"/>
    <property type="project" value="UniProtKB-KW"/>
</dbReference>
<dbReference type="GO" id="GO:0006048">
    <property type="term" value="P:UDP-N-acetylglucosamine biosynthetic process"/>
    <property type="evidence" value="ECO:0007669"/>
    <property type="project" value="UniProtKB-UniPathway"/>
</dbReference>
<dbReference type="CDD" id="cd02540">
    <property type="entry name" value="GT2_GlmU_N_bac"/>
    <property type="match status" value="1"/>
</dbReference>
<dbReference type="CDD" id="cd03353">
    <property type="entry name" value="LbH_GlmU_C"/>
    <property type="match status" value="1"/>
</dbReference>
<dbReference type="Gene3D" id="2.160.10.10">
    <property type="entry name" value="Hexapeptide repeat proteins"/>
    <property type="match status" value="1"/>
</dbReference>
<dbReference type="Gene3D" id="3.90.550.10">
    <property type="entry name" value="Spore Coat Polysaccharide Biosynthesis Protein SpsA, Chain A"/>
    <property type="match status" value="1"/>
</dbReference>
<dbReference type="HAMAP" id="MF_01631">
    <property type="entry name" value="GlmU"/>
    <property type="match status" value="1"/>
</dbReference>
<dbReference type="InterPro" id="IPR005882">
    <property type="entry name" value="Bifunctional_GlmU"/>
</dbReference>
<dbReference type="InterPro" id="IPR050065">
    <property type="entry name" value="GlmU-like"/>
</dbReference>
<dbReference type="InterPro" id="IPR038009">
    <property type="entry name" value="GlmU_C_LbH"/>
</dbReference>
<dbReference type="InterPro" id="IPR001451">
    <property type="entry name" value="Hexapep"/>
</dbReference>
<dbReference type="InterPro" id="IPR018357">
    <property type="entry name" value="Hexapep_transf_CS"/>
</dbReference>
<dbReference type="InterPro" id="IPR025877">
    <property type="entry name" value="MobA-like_NTP_Trfase"/>
</dbReference>
<dbReference type="InterPro" id="IPR029044">
    <property type="entry name" value="Nucleotide-diphossugar_trans"/>
</dbReference>
<dbReference type="InterPro" id="IPR011004">
    <property type="entry name" value="Trimer_LpxA-like_sf"/>
</dbReference>
<dbReference type="NCBIfam" id="TIGR01173">
    <property type="entry name" value="glmU"/>
    <property type="match status" value="1"/>
</dbReference>
<dbReference type="PANTHER" id="PTHR43584:SF3">
    <property type="entry name" value="BIFUNCTIONAL PROTEIN GLMU"/>
    <property type="match status" value="1"/>
</dbReference>
<dbReference type="PANTHER" id="PTHR43584">
    <property type="entry name" value="NUCLEOTIDYL TRANSFERASE"/>
    <property type="match status" value="1"/>
</dbReference>
<dbReference type="Pfam" id="PF00132">
    <property type="entry name" value="Hexapep"/>
    <property type="match status" value="1"/>
</dbReference>
<dbReference type="Pfam" id="PF12804">
    <property type="entry name" value="NTP_transf_3"/>
    <property type="match status" value="1"/>
</dbReference>
<dbReference type="SUPFAM" id="SSF53448">
    <property type="entry name" value="Nucleotide-diphospho-sugar transferases"/>
    <property type="match status" value="1"/>
</dbReference>
<dbReference type="SUPFAM" id="SSF51161">
    <property type="entry name" value="Trimeric LpxA-like enzymes"/>
    <property type="match status" value="1"/>
</dbReference>
<dbReference type="PROSITE" id="PS00101">
    <property type="entry name" value="HEXAPEP_TRANSFERASES"/>
    <property type="match status" value="1"/>
</dbReference>
<protein>
    <recommendedName>
        <fullName evidence="1">Bifunctional protein GlmU</fullName>
    </recommendedName>
    <domain>
        <recommendedName>
            <fullName evidence="1">UDP-N-acetylglucosamine pyrophosphorylase</fullName>
            <ecNumber evidence="1">2.7.7.23</ecNumber>
        </recommendedName>
        <alternativeName>
            <fullName evidence="1">N-acetylglucosamine-1-phosphate uridyltransferase</fullName>
        </alternativeName>
    </domain>
    <domain>
        <recommendedName>
            <fullName evidence="1">Glucosamine-1-phosphate N-acetyltransferase</fullName>
            <ecNumber evidence="1">2.3.1.157</ecNumber>
        </recommendedName>
    </domain>
</protein>
<feature type="chain" id="PRO_1000088128" description="Bifunctional protein GlmU">
    <location>
        <begin position="1"/>
        <end position="455"/>
    </location>
</feature>
<feature type="region of interest" description="Pyrophosphorylase" evidence="1">
    <location>
        <begin position="1"/>
        <end position="227"/>
    </location>
</feature>
<feature type="region of interest" description="Linker" evidence="1">
    <location>
        <begin position="228"/>
        <end position="248"/>
    </location>
</feature>
<feature type="region of interest" description="N-acetyltransferase" evidence="1">
    <location>
        <begin position="249"/>
        <end position="455"/>
    </location>
</feature>
<feature type="active site" description="Proton acceptor" evidence="1">
    <location>
        <position position="362"/>
    </location>
</feature>
<feature type="binding site" evidence="1">
    <location>
        <begin position="8"/>
        <end position="11"/>
    </location>
    <ligand>
        <name>UDP-N-acetyl-alpha-D-glucosamine</name>
        <dbReference type="ChEBI" id="CHEBI:57705"/>
    </ligand>
</feature>
<feature type="binding site" evidence="1">
    <location>
        <position position="22"/>
    </location>
    <ligand>
        <name>UDP-N-acetyl-alpha-D-glucosamine</name>
        <dbReference type="ChEBI" id="CHEBI:57705"/>
    </ligand>
</feature>
<feature type="binding site" evidence="1">
    <location>
        <position position="73"/>
    </location>
    <ligand>
        <name>UDP-N-acetyl-alpha-D-glucosamine</name>
        <dbReference type="ChEBI" id="CHEBI:57705"/>
    </ligand>
</feature>
<feature type="binding site" evidence="1">
    <location>
        <begin position="78"/>
        <end position="79"/>
    </location>
    <ligand>
        <name>UDP-N-acetyl-alpha-D-glucosamine</name>
        <dbReference type="ChEBI" id="CHEBI:57705"/>
    </ligand>
</feature>
<feature type="binding site" evidence="1">
    <location>
        <begin position="100"/>
        <end position="102"/>
    </location>
    <ligand>
        <name>UDP-N-acetyl-alpha-D-glucosamine</name>
        <dbReference type="ChEBI" id="CHEBI:57705"/>
    </ligand>
</feature>
<feature type="binding site" evidence="1">
    <location>
        <position position="102"/>
    </location>
    <ligand>
        <name>Mg(2+)</name>
        <dbReference type="ChEBI" id="CHEBI:18420"/>
    </ligand>
</feature>
<feature type="binding site" evidence="1">
    <location>
        <position position="137"/>
    </location>
    <ligand>
        <name>UDP-N-acetyl-alpha-D-glucosamine</name>
        <dbReference type="ChEBI" id="CHEBI:57705"/>
    </ligand>
</feature>
<feature type="binding site" evidence="1">
    <location>
        <position position="152"/>
    </location>
    <ligand>
        <name>UDP-N-acetyl-alpha-D-glucosamine</name>
        <dbReference type="ChEBI" id="CHEBI:57705"/>
    </ligand>
</feature>
<feature type="binding site" evidence="1">
    <location>
        <position position="167"/>
    </location>
    <ligand>
        <name>UDP-N-acetyl-alpha-D-glucosamine</name>
        <dbReference type="ChEBI" id="CHEBI:57705"/>
    </ligand>
</feature>
<feature type="binding site" evidence="1">
    <location>
        <position position="225"/>
    </location>
    <ligand>
        <name>Mg(2+)</name>
        <dbReference type="ChEBI" id="CHEBI:18420"/>
    </ligand>
</feature>
<feature type="binding site" evidence="1">
    <location>
        <position position="225"/>
    </location>
    <ligand>
        <name>UDP-N-acetyl-alpha-D-glucosamine</name>
        <dbReference type="ChEBI" id="CHEBI:57705"/>
    </ligand>
</feature>
<feature type="binding site" evidence="1">
    <location>
        <position position="332"/>
    </location>
    <ligand>
        <name>UDP-N-acetyl-alpha-D-glucosamine</name>
        <dbReference type="ChEBI" id="CHEBI:57705"/>
    </ligand>
</feature>
<feature type="binding site" evidence="1">
    <location>
        <position position="350"/>
    </location>
    <ligand>
        <name>UDP-N-acetyl-alpha-D-glucosamine</name>
        <dbReference type="ChEBI" id="CHEBI:57705"/>
    </ligand>
</feature>
<feature type="binding site" evidence="1">
    <location>
        <position position="365"/>
    </location>
    <ligand>
        <name>UDP-N-acetyl-alpha-D-glucosamine</name>
        <dbReference type="ChEBI" id="CHEBI:57705"/>
    </ligand>
</feature>
<feature type="binding site" evidence="1">
    <location>
        <position position="376"/>
    </location>
    <ligand>
        <name>UDP-N-acetyl-alpha-D-glucosamine</name>
        <dbReference type="ChEBI" id="CHEBI:57705"/>
    </ligand>
</feature>
<feature type="binding site" evidence="1">
    <location>
        <position position="379"/>
    </location>
    <ligand>
        <name>acetyl-CoA</name>
        <dbReference type="ChEBI" id="CHEBI:57288"/>
    </ligand>
</feature>
<feature type="binding site" evidence="1">
    <location>
        <begin position="385"/>
        <end position="386"/>
    </location>
    <ligand>
        <name>acetyl-CoA</name>
        <dbReference type="ChEBI" id="CHEBI:57288"/>
    </ligand>
</feature>
<feature type="binding site" evidence="1">
    <location>
        <position position="404"/>
    </location>
    <ligand>
        <name>acetyl-CoA</name>
        <dbReference type="ChEBI" id="CHEBI:57288"/>
    </ligand>
</feature>
<feature type="binding site" evidence="1">
    <location>
        <position position="422"/>
    </location>
    <ligand>
        <name>acetyl-CoA</name>
        <dbReference type="ChEBI" id="CHEBI:57288"/>
    </ligand>
</feature>
<feature type="binding site" evidence="1">
    <location>
        <position position="439"/>
    </location>
    <ligand>
        <name>acetyl-CoA</name>
        <dbReference type="ChEBI" id="CHEBI:57288"/>
    </ligand>
</feature>
<reference key="1">
    <citation type="journal article" date="2009" name="Infect. Immun.">
        <title>Comparative genomics reveal extensive transposon-mediated genomic plasticity and diversity among potential effector proteins within the genus Coxiella.</title>
        <authorList>
            <person name="Beare P.A."/>
            <person name="Unsworth N."/>
            <person name="Andoh M."/>
            <person name="Voth D.E."/>
            <person name="Omsland A."/>
            <person name="Gilk S.D."/>
            <person name="Williams K.P."/>
            <person name="Sobral B.W."/>
            <person name="Kupko J.J. III"/>
            <person name="Porcella S.F."/>
            <person name="Samuel J.E."/>
            <person name="Heinzen R.A."/>
        </authorList>
    </citation>
    <scope>NUCLEOTIDE SEQUENCE [LARGE SCALE GENOMIC DNA]</scope>
    <source>
        <strain>Dugway 5J108-111</strain>
    </source>
</reference>
<gene>
    <name evidence="1" type="primary">glmU</name>
    <name type="ordered locus">CBUD_0173</name>
</gene>
<keyword id="KW-0012">Acyltransferase</keyword>
<keyword id="KW-0133">Cell shape</keyword>
<keyword id="KW-0961">Cell wall biogenesis/degradation</keyword>
<keyword id="KW-0963">Cytoplasm</keyword>
<keyword id="KW-0460">Magnesium</keyword>
<keyword id="KW-0479">Metal-binding</keyword>
<keyword id="KW-0511">Multifunctional enzyme</keyword>
<keyword id="KW-0548">Nucleotidyltransferase</keyword>
<keyword id="KW-0573">Peptidoglycan synthesis</keyword>
<keyword id="KW-0677">Repeat</keyword>
<keyword id="KW-0808">Transferase</keyword>
<sequence>MGLSVIILAAGQGKRMASSTPKILHPLGGIPLLERVVNTARLLNPHTIHVVYGNGGSHVREKLNYLPVHWIEQSQQLGTGHAVLQAIPFCQNEDRVLILYGDVPLISPKTLNSLLENTPSNGLGVVVAELPDPTGLGRIIRDDFGNILSIVEHKDVAEHQLKIREINTGIMTTTAMNLKKWLPQLNNNNCQKEYYLTDTVALAVAEGCPVGGVAAQCCEEVQGVNDRWELTKLERYYQRLMAKKLSLAGVTIIDPERFDARGENIEIAPDVVIDVNVILEGNVQLDRNVRIGPNVILKNTTVGENTEIHANSVIEAAVIKANCSVGPFARLRPGSVLEEGAKVGNFVEMKKTTLGRGSKANHLTYLGDTIIGKNVNVGAGTITCNYDGANKWQTKIEDGAFIGSNVALVAPLTVGKNATIGAGSTLSQDAPPDQLTVARERQRTIKGWHRPTKKE</sequence>